<comment type="function">
    <text evidence="3">Cytochrome P450 involved in the biosynthesis of etoposide, a chemotherapeutic compound of the topoisomerase inhibitor family (PubMed:26359402). Catalyzes the conversion of bursehernin to demethylyatein (PubMed:26359402).</text>
</comment>
<comment type="catalytic activity">
    <reaction evidence="3">
        <text>(-)-bursehernin + reduced [NADPH--hemoprotein reductase] + O2 = (-)-5'-demethylyatein + oxidized [NADPH--hemoprotein reductase] + H2O + H(+)</text>
        <dbReference type="Rhea" id="RHEA:49028"/>
        <dbReference type="Rhea" id="RHEA-COMP:11964"/>
        <dbReference type="Rhea" id="RHEA-COMP:11965"/>
        <dbReference type="ChEBI" id="CHEBI:15377"/>
        <dbReference type="ChEBI" id="CHEBI:15378"/>
        <dbReference type="ChEBI" id="CHEBI:15379"/>
        <dbReference type="ChEBI" id="CHEBI:57618"/>
        <dbReference type="ChEBI" id="CHEBI:58210"/>
        <dbReference type="ChEBI" id="CHEBI:90893"/>
        <dbReference type="ChEBI" id="CHEBI:90894"/>
        <dbReference type="EC" id="1.14.14.131"/>
    </reaction>
    <physiologicalReaction direction="left-to-right" evidence="3">
        <dbReference type="Rhea" id="RHEA:49029"/>
    </physiologicalReaction>
</comment>
<comment type="cofactor">
    <cofactor evidence="1">
        <name>heme</name>
        <dbReference type="ChEBI" id="CHEBI:30413"/>
    </cofactor>
</comment>
<comment type="pathway">
    <text evidence="3">Aromatic compound metabolism; phenylpropanoid biosynthesis.</text>
</comment>
<comment type="subcellular location">
    <subcellularLocation>
        <location evidence="2">Membrane</location>
        <topology evidence="2">Single-pass membrane protein</topology>
    </subcellularLocation>
</comment>
<comment type="induction">
    <text evidence="3">Transiently induced after wounding.</text>
</comment>
<comment type="biotechnology">
    <text evidence="6">Combinatorially expression of Sinopodophyllum hexandrum (mayapple) genes of the podophyllotoxin pathway (e.g. DIR, PLR, SDH, CYP719A23, OMT3, CYP71CU1, OMT1, 2-ODD, CYP71BE54 and CYP82D61) in Nicotiana benthamiana (tobacco) results in the production of the chemotherapeutic compound etoposide.</text>
</comment>
<comment type="similarity">
    <text evidence="5">Belongs to the cytochrome P450 family.</text>
</comment>
<protein>
    <recommendedName>
        <fullName evidence="4">Desmethylyatein synthase</fullName>
        <ecNumber evidence="3">1.14.14.131</ecNumber>
    </recommendedName>
    <alternativeName>
        <fullName evidence="4">Cytochrome P450 family 71 subfamily CU polypeptide 1</fullName>
    </alternativeName>
</protein>
<sequence>METFQCLTLFLLFISTVFILKRKFSHKPNLPPSPPKLPILGNFHQLGTLVHRAVTVLAAKYGPLMLLHFGKTPVLIVSSQETAKEIMKTHDLALANRPLTTAARALLYDCTDISFAPYGEYWREMKKMAVLNLLSIKKIQSFRSVREELASDMIKEITRLSKTGAPVDVTNMLYHFSEDLLFRCTLGFKPKGQHKFQKLSRDFLDLVGAFCFNDFFPGMAWMDALTGLNRKLKKGSRELDDFVDELIEERIAMVKDGVEPNEFLDLLLHTHRDTTQEIKLTRDNVKAIILDTFLGGIDLPASVMEWAMAELMRNPSKMKIAQEEVRKVVGNKNKVDEDDVYQMNFLKSAVKETLRLHPPAPLLFARESYTSINVENYIIPPYTSVMINIWHIQRDPKLWDKAEEFIPERFMNSGIDYKSHDYEFIPFGSGRRGCPGMSFGVAAVEFAVANLLYWFDWKFVGDTTPETLDMTEDYCFALFKKKPLHFIPISRSS</sequence>
<organism>
    <name type="scientific">Sinopodophyllum hexandrum</name>
    <name type="common">Himalayan may apple</name>
    <name type="synonym">Podophyllum hexandrum</name>
    <dbReference type="NCBI Taxonomy" id="93608"/>
    <lineage>
        <taxon>Eukaryota</taxon>
        <taxon>Viridiplantae</taxon>
        <taxon>Streptophyta</taxon>
        <taxon>Embryophyta</taxon>
        <taxon>Tracheophyta</taxon>
        <taxon>Spermatophyta</taxon>
        <taxon>Magnoliopsida</taxon>
        <taxon>Ranunculales</taxon>
        <taxon>Berberidaceae</taxon>
        <taxon>Podophylloideae</taxon>
        <taxon>Podophylleae</taxon>
        <taxon>Sinopodophyllum</taxon>
    </lineage>
</organism>
<evidence type="ECO:0000250" key="1">
    <source>
        <dbReference type="UniProtKB" id="Q96242"/>
    </source>
</evidence>
<evidence type="ECO:0000255" key="2"/>
<evidence type="ECO:0000269" key="3">
    <source>
    </source>
</evidence>
<evidence type="ECO:0000303" key="4">
    <source>
    </source>
</evidence>
<evidence type="ECO:0000305" key="5"/>
<evidence type="ECO:0000305" key="6">
    <source>
    </source>
</evidence>
<keyword id="KW-0349">Heme</keyword>
<keyword id="KW-0408">Iron</keyword>
<keyword id="KW-0472">Membrane</keyword>
<keyword id="KW-0479">Metal-binding</keyword>
<keyword id="KW-0503">Monooxygenase</keyword>
<keyword id="KW-0560">Oxidoreductase</keyword>
<keyword id="KW-0812">Transmembrane</keyword>
<keyword id="KW-1133">Transmembrane helix</keyword>
<proteinExistence type="evidence at protein level"/>
<dbReference type="EC" id="1.14.14.131" evidence="3"/>
<dbReference type="EMBL" id="KT390172">
    <property type="protein sequence ID" value="ALG05134.1"/>
    <property type="molecule type" value="mRNA"/>
</dbReference>
<dbReference type="SMR" id="A0A0N9HTU1"/>
<dbReference type="KEGG" id="ag:ALG05134"/>
<dbReference type="BRENDA" id="1.14.14.131">
    <property type="organism ID" value="4928"/>
</dbReference>
<dbReference type="UniPathway" id="UPA00711"/>
<dbReference type="GO" id="GO:0016020">
    <property type="term" value="C:membrane"/>
    <property type="evidence" value="ECO:0007669"/>
    <property type="project" value="UniProtKB-SubCell"/>
</dbReference>
<dbReference type="GO" id="GO:0020037">
    <property type="term" value="F:heme binding"/>
    <property type="evidence" value="ECO:0007669"/>
    <property type="project" value="InterPro"/>
</dbReference>
<dbReference type="GO" id="GO:0005506">
    <property type="term" value="F:iron ion binding"/>
    <property type="evidence" value="ECO:0007669"/>
    <property type="project" value="InterPro"/>
</dbReference>
<dbReference type="GO" id="GO:0004497">
    <property type="term" value="F:monooxygenase activity"/>
    <property type="evidence" value="ECO:0007669"/>
    <property type="project" value="UniProtKB-KW"/>
</dbReference>
<dbReference type="GO" id="GO:0016705">
    <property type="term" value="F:oxidoreductase activity, acting on paired donors, with incorporation or reduction of molecular oxygen"/>
    <property type="evidence" value="ECO:0000314"/>
    <property type="project" value="UniProtKB"/>
</dbReference>
<dbReference type="GO" id="GO:0009699">
    <property type="term" value="P:phenylpropanoid biosynthetic process"/>
    <property type="evidence" value="ECO:0000314"/>
    <property type="project" value="UniProtKB"/>
</dbReference>
<dbReference type="GO" id="GO:0009611">
    <property type="term" value="P:response to wounding"/>
    <property type="evidence" value="ECO:0000270"/>
    <property type="project" value="UniProtKB"/>
</dbReference>
<dbReference type="CDD" id="cd11072">
    <property type="entry name" value="CYP71-like"/>
    <property type="match status" value="1"/>
</dbReference>
<dbReference type="FunFam" id="1.10.630.10:FF:000011">
    <property type="entry name" value="Cytochrome P450 83B1"/>
    <property type="match status" value="1"/>
</dbReference>
<dbReference type="Gene3D" id="1.10.630.10">
    <property type="entry name" value="Cytochrome P450"/>
    <property type="match status" value="1"/>
</dbReference>
<dbReference type="InterPro" id="IPR001128">
    <property type="entry name" value="Cyt_P450"/>
</dbReference>
<dbReference type="InterPro" id="IPR017972">
    <property type="entry name" value="Cyt_P450_CS"/>
</dbReference>
<dbReference type="InterPro" id="IPR002401">
    <property type="entry name" value="Cyt_P450_E_grp-I"/>
</dbReference>
<dbReference type="InterPro" id="IPR036396">
    <property type="entry name" value="Cyt_P450_sf"/>
</dbReference>
<dbReference type="PANTHER" id="PTHR47955:SF18">
    <property type="entry name" value="CYTOCHROME P450 71A1-LIKE"/>
    <property type="match status" value="1"/>
</dbReference>
<dbReference type="PANTHER" id="PTHR47955">
    <property type="entry name" value="CYTOCHROME P450 FAMILY 71 PROTEIN"/>
    <property type="match status" value="1"/>
</dbReference>
<dbReference type="Pfam" id="PF00067">
    <property type="entry name" value="p450"/>
    <property type="match status" value="1"/>
</dbReference>
<dbReference type="PRINTS" id="PR00463">
    <property type="entry name" value="EP450I"/>
</dbReference>
<dbReference type="PRINTS" id="PR00385">
    <property type="entry name" value="P450"/>
</dbReference>
<dbReference type="SUPFAM" id="SSF48264">
    <property type="entry name" value="Cytochrome P450"/>
    <property type="match status" value="1"/>
</dbReference>
<dbReference type="PROSITE" id="PS00086">
    <property type="entry name" value="CYTOCHROME_P450"/>
    <property type="match status" value="1"/>
</dbReference>
<feature type="chain" id="PRO_5006035493" description="Desmethylyatein synthase">
    <location>
        <begin position="1"/>
        <end position="493"/>
    </location>
</feature>
<feature type="transmembrane region" description="Helical" evidence="2">
    <location>
        <begin position="1"/>
        <end position="21"/>
    </location>
</feature>
<feature type="binding site" description="axial binding residue" evidence="1">
    <location>
        <position position="434"/>
    </location>
    <ligand>
        <name>heme</name>
        <dbReference type="ChEBI" id="CHEBI:30413"/>
    </ligand>
    <ligandPart>
        <name>Fe</name>
        <dbReference type="ChEBI" id="CHEBI:18248"/>
    </ligandPart>
</feature>
<accession>A0A0N9HTU1</accession>
<gene>
    <name evidence="4" type="primary">CYP71CU1</name>
    <name evidence="4" type="synonym">Phex524</name>
</gene>
<name>C71CU_SINHE</name>
<reference key="1">
    <citation type="journal article" date="2015" name="Science">
        <title>Six enzymes from mayapple that complete the biosynthetic pathway to the etoposide aglycone.</title>
        <authorList>
            <person name="Lau W."/>
            <person name="Sattely E.S."/>
        </authorList>
    </citation>
    <scope>NUCLEOTIDE SEQUENCE [MRNA]</scope>
    <scope>FUNCTION</scope>
    <scope>CATALYTIC ACTIVITY</scope>
    <scope>BIOTECHNOLOGY</scope>
    <scope>INDUCTION BY WOUNDING</scope>
    <scope>PATHWAY</scope>
</reference>